<gene>
    <name type="primary">CELA1</name>
    <name type="synonym">ELA1</name>
    <name type="synonym">ELS1</name>
</gene>
<sequence length="266" mass="28841">MLRFLVLATLVLYGHSTRDFPETNARVVGGTEARKNPWPSQISLQYLSGGKWYHTCGGTLIRQNWVMTAAHCVDRKMTFRVVAGEHNLSQNDGTEQRVSVQKIVVHPYWNSNNVAAGYDIALLRLAQRVTLNNYVQLGVLPAAGTILANNNPCYITGWGMTKTNGQLAQALQQAYLPSVDYATCSSSSYWGSTVKSTMVCAGGDGIRSGCQGDSGGPLHCLVNGKYAVHGVTSFVSSLGCNVSRKPTVFTRVSAYISWINNVIASN</sequence>
<accession>Q5R1M5</accession>
<reference key="1">
    <citation type="submission" date="2004-12" db="EMBL/GenBank/DDBJ databases">
        <title>Felis catus ELS1 mRNA for elastase 1, complete cds.</title>
        <authorList>
            <person name="Sato N."/>
            <person name="Kano R."/>
            <person name="Hasegawa A."/>
        </authorList>
    </citation>
    <scope>NUCLEOTIDE SEQUENCE [MRNA]</scope>
    <source>
        <tissue>Pancreas</tissue>
    </source>
</reference>
<organism>
    <name type="scientific">Felis catus</name>
    <name type="common">Cat</name>
    <name type="synonym">Felis silvestris catus</name>
    <dbReference type="NCBI Taxonomy" id="9685"/>
    <lineage>
        <taxon>Eukaryota</taxon>
        <taxon>Metazoa</taxon>
        <taxon>Chordata</taxon>
        <taxon>Craniata</taxon>
        <taxon>Vertebrata</taxon>
        <taxon>Euteleostomi</taxon>
        <taxon>Mammalia</taxon>
        <taxon>Eutheria</taxon>
        <taxon>Laurasiatheria</taxon>
        <taxon>Carnivora</taxon>
        <taxon>Feliformia</taxon>
        <taxon>Felidae</taxon>
        <taxon>Felinae</taxon>
        <taxon>Felis</taxon>
    </lineage>
</organism>
<name>CELA1_FELCA</name>
<feature type="signal peptide" evidence="1">
    <location>
        <begin position="1"/>
        <end position="16"/>
    </location>
</feature>
<feature type="propeptide" id="PRO_0000027675" description="Activation peptide" evidence="1">
    <location>
        <begin position="17"/>
        <end position="26"/>
    </location>
</feature>
<feature type="chain" id="PRO_0000027676" description="Chymotrypsin-like elastase family member 1">
    <location>
        <begin position="27"/>
        <end position="266"/>
    </location>
</feature>
<feature type="domain" description="Peptidase S1" evidence="4">
    <location>
        <begin position="27"/>
        <end position="264"/>
    </location>
</feature>
<feature type="active site" description="Charge relay system" evidence="1">
    <location>
        <position position="71"/>
    </location>
</feature>
<feature type="active site" description="Charge relay system" evidence="1">
    <location>
        <position position="119"/>
    </location>
</feature>
<feature type="active site" description="Charge relay system" evidence="1">
    <location>
        <position position="214"/>
    </location>
</feature>
<feature type="binding site" evidence="1">
    <location>
        <position position="85"/>
    </location>
    <ligand>
        <name>Ca(2+)</name>
        <dbReference type="ChEBI" id="CHEBI:29108"/>
    </ligand>
</feature>
<feature type="binding site" evidence="1">
    <location>
        <position position="87"/>
    </location>
    <ligand>
        <name>Ca(2+)</name>
        <dbReference type="ChEBI" id="CHEBI:29108"/>
    </ligand>
</feature>
<feature type="binding site" evidence="1">
    <location>
        <position position="90"/>
    </location>
    <ligand>
        <name>Ca(2+)</name>
        <dbReference type="ChEBI" id="CHEBI:29108"/>
    </ligand>
</feature>
<feature type="binding site" evidence="1">
    <location>
        <position position="95"/>
    </location>
    <ligand>
        <name>Ca(2+)</name>
        <dbReference type="ChEBI" id="CHEBI:29108"/>
    </ligand>
</feature>
<feature type="glycosylation site" description="N-linked (GlcNAc...) asparagine" evidence="3">
    <location>
        <position position="87"/>
    </location>
</feature>
<feature type="glycosylation site" description="N-linked (GlcNAc...) asparagine" evidence="3">
    <location>
        <position position="241"/>
    </location>
</feature>
<feature type="disulfide bond" evidence="4">
    <location>
        <begin position="56"/>
        <end position="72"/>
    </location>
</feature>
<feature type="disulfide bond" evidence="4">
    <location>
        <begin position="153"/>
        <end position="220"/>
    </location>
</feature>
<feature type="disulfide bond" evidence="4">
    <location>
        <begin position="184"/>
        <end position="200"/>
    </location>
</feature>
<feature type="disulfide bond" evidence="4">
    <location>
        <begin position="210"/>
        <end position="240"/>
    </location>
</feature>
<keyword id="KW-0106">Calcium</keyword>
<keyword id="KW-1015">Disulfide bond</keyword>
<keyword id="KW-0325">Glycoprotein</keyword>
<keyword id="KW-0378">Hydrolase</keyword>
<keyword id="KW-0479">Metal-binding</keyword>
<keyword id="KW-0645">Protease</keyword>
<keyword id="KW-1185">Reference proteome</keyword>
<keyword id="KW-0964">Secreted</keyword>
<keyword id="KW-0720">Serine protease</keyword>
<keyword id="KW-0732">Signal</keyword>
<keyword id="KW-0865">Zymogen</keyword>
<evidence type="ECO:0000250" key="1">
    <source>
        <dbReference type="UniProtKB" id="P00772"/>
    </source>
</evidence>
<evidence type="ECO:0000250" key="2">
    <source>
        <dbReference type="UniProtKB" id="Q91X79"/>
    </source>
</evidence>
<evidence type="ECO:0000255" key="3"/>
<evidence type="ECO:0000255" key="4">
    <source>
        <dbReference type="PROSITE-ProRule" id="PRU00274"/>
    </source>
</evidence>
<protein>
    <recommendedName>
        <fullName>Chymotrypsin-like elastase family member 1</fullName>
        <ecNumber>3.4.21.36</ecNumber>
    </recommendedName>
    <alternativeName>
        <fullName>Elastase-1</fullName>
    </alternativeName>
</protein>
<comment type="function">
    <text evidence="2">Serine proteases that hydrolyze many proteins in addition to elastin.</text>
</comment>
<comment type="catalytic activity">
    <reaction evidence="2">
        <text>Hydrolysis of proteins, including elastin. Preferential cleavage: Ala-|-Xaa.</text>
        <dbReference type="EC" id="3.4.21.36"/>
    </reaction>
</comment>
<comment type="cofactor">
    <cofactor evidence="1">
        <name>Ca(2+)</name>
        <dbReference type="ChEBI" id="CHEBI:29108"/>
    </cofactor>
    <text evidence="1">Binds 1 Ca(2+) ion per subunit.</text>
</comment>
<comment type="subcellular location">
    <subcellularLocation>
        <location evidence="1">Secreted</location>
    </subcellularLocation>
</comment>
<comment type="similarity">
    <text evidence="4">Belongs to the peptidase S1 family. Elastase subfamily.</text>
</comment>
<dbReference type="EC" id="3.4.21.36"/>
<dbReference type="EMBL" id="AB196342">
    <property type="protein sequence ID" value="BAD77813.1"/>
    <property type="molecule type" value="mRNA"/>
</dbReference>
<dbReference type="RefSeq" id="NP_001009389.1">
    <property type="nucleotide sequence ID" value="NM_001009389.2"/>
</dbReference>
<dbReference type="SMR" id="Q5R1M5"/>
<dbReference type="FunCoup" id="Q5R1M5">
    <property type="interactions" value="2"/>
</dbReference>
<dbReference type="STRING" id="9685.ENSFCAP00000061773"/>
<dbReference type="MEROPS" id="S01.153"/>
<dbReference type="GlyCosmos" id="Q5R1M5">
    <property type="glycosylation" value="2 sites, No reported glycans"/>
</dbReference>
<dbReference type="PaxDb" id="9685-ENSFCAP00000004073"/>
<dbReference type="GeneID" id="494217"/>
<dbReference type="KEGG" id="fca:494217"/>
<dbReference type="CTD" id="1990"/>
<dbReference type="eggNOG" id="KOG3627">
    <property type="taxonomic scope" value="Eukaryota"/>
</dbReference>
<dbReference type="InParanoid" id="Q5R1M5"/>
<dbReference type="OrthoDB" id="10061449at2759"/>
<dbReference type="TreeFam" id="TF330455"/>
<dbReference type="Proteomes" id="UP000011712">
    <property type="component" value="Unplaced"/>
</dbReference>
<dbReference type="GO" id="GO:0005615">
    <property type="term" value="C:extracellular space"/>
    <property type="evidence" value="ECO:0000318"/>
    <property type="project" value="GO_Central"/>
</dbReference>
<dbReference type="GO" id="GO:0046872">
    <property type="term" value="F:metal ion binding"/>
    <property type="evidence" value="ECO:0007669"/>
    <property type="project" value="UniProtKB-KW"/>
</dbReference>
<dbReference type="GO" id="GO:0004252">
    <property type="term" value="F:serine-type endopeptidase activity"/>
    <property type="evidence" value="ECO:0000250"/>
    <property type="project" value="UniProtKB"/>
</dbReference>
<dbReference type="GO" id="GO:0006508">
    <property type="term" value="P:proteolysis"/>
    <property type="evidence" value="ECO:0000318"/>
    <property type="project" value="GO_Central"/>
</dbReference>
<dbReference type="CDD" id="cd00190">
    <property type="entry name" value="Tryp_SPc"/>
    <property type="match status" value="1"/>
</dbReference>
<dbReference type="FunFam" id="2.40.10.10:FF:000280">
    <property type="match status" value="1"/>
</dbReference>
<dbReference type="FunFam" id="2.40.10.10:FF:000122">
    <property type="entry name" value="Chymotrypsin-like elastase family member 1"/>
    <property type="match status" value="1"/>
</dbReference>
<dbReference type="Gene3D" id="2.40.10.10">
    <property type="entry name" value="Trypsin-like serine proteases"/>
    <property type="match status" value="2"/>
</dbReference>
<dbReference type="InterPro" id="IPR050850">
    <property type="entry name" value="Peptidase_S1_Elastase_sf"/>
</dbReference>
<dbReference type="InterPro" id="IPR009003">
    <property type="entry name" value="Peptidase_S1_PA"/>
</dbReference>
<dbReference type="InterPro" id="IPR043504">
    <property type="entry name" value="Peptidase_S1_PA_chymotrypsin"/>
</dbReference>
<dbReference type="InterPro" id="IPR001314">
    <property type="entry name" value="Peptidase_S1A"/>
</dbReference>
<dbReference type="InterPro" id="IPR001254">
    <property type="entry name" value="Trypsin_dom"/>
</dbReference>
<dbReference type="InterPro" id="IPR018114">
    <property type="entry name" value="TRYPSIN_HIS"/>
</dbReference>
<dbReference type="InterPro" id="IPR033116">
    <property type="entry name" value="TRYPSIN_SER"/>
</dbReference>
<dbReference type="PANTHER" id="PTHR24257">
    <property type="entry name" value="CHYMOTRYPSIN-LIKE ELASTASE FAMILY MEMBER"/>
    <property type="match status" value="1"/>
</dbReference>
<dbReference type="PANTHER" id="PTHR24257:SF0">
    <property type="entry name" value="CHYMOTRYPSIN-LIKE ELASTASE FAMILY MEMBER 1"/>
    <property type="match status" value="1"/>
</dbReference>
<dbReference type="Pfam" id="PF00089">
    <property type="entry name" value="Trypsin"/>
    <property type="match status" value="1"/>
</dbReference>
<dbReference type="PRINTS" id="PR00722">
    <property type="entry name" value="CHYMOTRYPSIN"/>
</dbReference>
<dbReference type="SMART" id="SM00020">
    <property type="entry name" value="Tryp_SPc"/>
    <property type="match status" value="1"/>
</dbReference>
<dbReference type="SUPFAM" id="SSF50494">
    <property type="entry name" value="Trypsin-like serine proteases"/>
    <property type="match status" value="1"/>
</dbReference>
<dbReference type="PROSITE" id="PS50240">
    <property type="entry name" value="TRYPSIN_DOM"/>
    <property type="match status" value="1"/>
</dbReference>
<dbReference type="PROSITE" id="PS00134">
    <property type="entry name" value="TRYPSIN_HIS"/>
    <property type="match status" value="1"/>
</dbReference>
<dbReference type="PROSITE" id="PS00135">
    <property type="entry name" value="TRYPSIN_SER"/>
    <property type="match status" value="1"/>
</dbReference>
<proteinExistence type="evidence at transcript level"/>